<proteinExistence type="inferred from homology"/>
<protein>
    <recommendedName>
        <fullName evidence="1">Iron-binding protein IscA</fullName>
    </recommendedName>
    <alternativeName>
        <fullName evidence="1">Iron-sulfur cluster assembly protein</fullName>
    </alternativeName>
</protein>
<sequence>MSISLTESAAQRVSSFLSHRGKGVGLRLGVRTSGCSGMAYLLEFADMINEDDTVFEDKGVKVIVDGKSMVYLDGTELDFVKEGLNEGFKFNNPNVSSECGCGESFNV</sequence>
<feature type="chain" id="PRO_0000077000" description="Iron-binding protein IscA">
    <location>
        <begin position="1"/>
        <end position="107"/>
    </location>
</feature>
<feature type="binding site" evidence="1">
    <location>
        <position position="35"/>
    </location>
    <ligand>
        <name>Fe cation</name>
        <dbReference type="ChEBI" id="CHEBI:24875"/>
    </ligand>
</feature>
<feature type="binding site" evidence="1">
    <location>
        <position position="99"/>
    </location>
    <ligand>
        <name>Fe cation</name>
        <dbReference type="ChEBI" id="CHEBI:24875"/>
    </ligand>
</feature>
<feature type="binding site" evidence="1">
    <location>
        <position position="101"/>
    </location>
    <ligand>
        <name>Fe cation</name>
        <dbReference type="ChEBI" id="CHEBI:24875"/>
    </ligand>
</feature>
<organism>
    <name type="scientific">Photorhabdus laumondii subsp. laumondii (strain DSM 15139 / CIP 105565 / TT01)</name>
    <name type="common">Photorhabdus luminescens subsp. laumondii</name>
    <dbReference type="NCBI Taxonomy" id="243265"/>
    <lineage>
        <taxon>Bacteria</taxon>
        <taxon>Pseudomonadati</taxon>
        <taxon>Pseudomonadota</taxon>
        <taxon>Gammaproteobacteria</taxon>
        <taxon>Enterobacterales</taxon>
        <taxon>Morganellaceae</taxon>
        <taxon>Photorhabdus</taxon>
    </lineage>
</organism>
<evidence type="ECO:0000255" key="1">
    <source>
        <dbReference type="HAMAP-Rule" id="MF_01429"/>
    </source>
</evidence>
<name>ISCA_PHOLL</name>
<accession>Q7N226</accession>
<gene>
    <name evidence="1" type="primary">iscA</name>
    <name type="ordered locus">plu3281</name>
</gene>
<comment type="function">
    <text evidence="1">Is able to transfer iron-sulfur clusters to apo-ferredoxin. Multiple cycles of [2Fe2S] cluster formation and transfer are observed, suggesting that IscA acts catalytically. Recruits intracellular free iron so as to provide iron for the assembly of transient iron-sulfur cluster in IscU in the presence of IscS, L-cysteine and the thioredoxin reductase system TrxA/TrxB.</text>
</comment>
<comment type="cofactor">
    <cofactor evidence="1">
        <name>Fe cation</name>
        <dbReference type="ChEBI" id="CHEBI:24875"/>
    </cofactor>
    <text evidence="1">Binds 2 iron ions per dimer. The dimer may bind additional iron ions.</text>
</comment>
<comment type="subunit">
    <text evidence="1">Homodimer; may form tetramers and higher multimers.</text>
</comment>
<comment type="similarity">
    <text evidence="1">Belongs to the HesB/IscA family.</text>
</comment>
<reference key="1">
    <citation type="journal article" date="2003" name="Nat. Biotechnol.">
        <title>The genome sequence of the entomopathogenic bacterium Photorhabdus luminescens.</title>
        <authorList>
            <person name="Duchaud E."/>
            <person name="Rusniok C."/>
            <person name="Frangeul L."/>
            <person name="Buchrieser C."/>
            <person name="Givaudan A."/>
            <person name="Taourit S."/>
            <person name="Bocs S."/>
            <person name="Boursaux-Eude C."/>
            <person name="Chandler M."/>
            <person name="Charles J.-F."/>
            <person name="Dassa E."/>
            <person name="Derose R."/>
            <person name="Derzelle S."/>
            <person name="Freyssinet G."/>
            <person name="Gaudriault S."/>
            <person name="Medigue C."/>
            <person name="Lanois A."/>
            <person name="Powell K."/>
            <person name="Siguier P."/>
            <person name="Vincent R."/>
            <person name="Wingate V."/>
            <person name="Zouine M."/>
            <person name="Glaser P."/>
            <person name="Boemare N."/>
            <person name="Danchin A."/>
            <person name="Kunst F."/>
        </authorList>
    </citation>
    <scope>NUCLEOTIDE SEQUENCE [LARGE SCALE GENOMIC DNA]</scope>
    <source>
        <strain>DSM 15139 / CIP 105565 / TT01</strain>
    </source>
</reference>
<dbReference type="EMBL" id="BX571870">
    <property type="protein sequence ID" value="CAE15655.1"/>
    <property type="molecule type" value="Genomic_DNA"/>
</dbReference>
<dbReference type="RefSeq" id="WP_011147476.1">
    <property type="nucleotide sequence ID" value="NC_005126.1"/>
</dbReference>
<dbReference type="SMR" id="Q7N226"/>
<dbReference type="STRING" id="243265.plu3281"/>
<dbReference type="GeneID" id="88805539"/>
<dbReference type="KEGG" id="plu:plu3281"/>
<dbReference type="eggNOG" id="COG0316">
    <property type="taxonomic scope" value="Bacteria"/>
</dbReference>
<dbReference type="HOGENOM" id="CLU_069054_5_1_6"/>
<dbReference type="OrthoDB" id="9801228at2"/>
<dbReference type="Proteomes" id="UP000002514">
    <property type="component" value="Chromosome"/>
</dbReference>
<dbReference type="GO" id="GO:0005829">
    <property type="term" value="C:cytosol"/>
    <property type="evidence" value="ECO:0007669"/>
    <property type="project" value="TreeGrafter"/>
</dbReference>
<dbReference type="GO" id="GO:0051537">
    <property type="term" value="F:2 iron, 2 sulfur cluster binding"/>
    <property type="evidence" value="ECO:0007669"/>
    <property type="project" value="TreeGrafter"/>
</dbReference>
<dbReference type="GO" id="GO:0005506">
    <property type="term" value="F:iron ion binding"/>
    <property type="evidence" value="ECO:0007669"/>
    <property type="project" value="UniProtKB-UniRule"/>
</dbReference>
<dbReference type="GO" id="GO:0016226">
    <property type="term" value="P:iron-sulfur cluster assembly"/>
    <property type="evidence" value="ECO:0007669"/>
    <property type="project" value="UniProtKB-UniRule"/>
</dbReference>
<dbReference type="FunFam" id="2.60.300.12:FF:000001">
    <property type="entry name" value="Iron-binding protein IscA"/>
    <property type="match status" value="1"/>
</dbReference>
<dbReference type="Gene3D" id="2.60.300.12">
    <property type="entry name" value="HesB-like domain"/>
    <property type="match status" value="1"/>
</dbReference>
<dbReference type="HAMAP" id="MF_01429">
    <property type="entry name" value="Fe_S_insert_IscA"/>
    <property type="match status" value="1"/>
</dbReference>
<dbReference type="InterPro" id="IPR050322">
    <property type="entry name" value="Fe-S_cluster_asmbl/transfer"/>
</dbReference>
<dbReference type="InterPro" id="IPR000361">
    <property type="entry name" value="FeS_biogenesis"/>
</dbReference>
<dbReference type="InterPro" id="IPR016092">
    <property type="entry name" value="FeS_cluster_insertion"/>
</dbReference>
<dbReference type="InterPro" id="IPR017870">
    <property type="entry name" value="FeS_cluster_insertion_CS"/>
</dbReference>
<dbReference type="InterPro" id="IPR035903">
    <property type="entry name" value="HesB-like_dom_sf"/>
</dbReference>
<dbReference type="InterPro" id="IPR011302">
    <property type="entry name" value="IscA_proteobacteria"/>
</dbReference>
<dbReference type="NCBIfam" id="TIGR00049">
    <property type="entry name" value="iron-sulfur cluster assembly accessory protein"/>
    <property type="match status" value="1"/>
</dbReference>
<dbReference type="NCBIfam" id="TIGR02011">
    <property type="entry name" value="IscA"/>
    <property type="match status" value="1"/>
</dbReference>
<dbReference type="NCBIfam" id="NF007049">
    <property type="entry name" value="PRK09502.1"/>
    <property type="match status" value="1"/>
</dbReference>
<dbReference type="PANTHER" id="PTHR10072:SF41">
    <property type="entry name" value="IRON-SULFUR CLUSTER ASSEMBLY 1 HOMOLOG, MITOCHONDRIAL"/>
    <property type="match status" value="1"/>
</dbReference>
<dbReference type="PANTHER" id="PTHR10072">
    <property type="entry name" value="IRON-SULFUR CLUSTER ASSEMBLY PROTEIN"/>
    <property type="match status" value="1"/>
</dbReference>
<dbReference type="Pfam" id="PF01521">
    <property type="entry name" value="Fe-S_biosyn"/>
    <property type="match status" value="1"/>
</dbReference>
<dbReference type="SUPFAM" id="SSF89360">
    <property type="entry name" value="HesB-like domain"/>
    <property type="match status" value="1"/>
</dbReference>
<dbReference type="PROSITE" id="PS01152">
    <property type="entry name" value="HESB"/>
    <property type="match status" value="1"/>
</dbReference>
<keyword id="KW-0408">Iron</keyword>
<keyword id="KW-0479">Metal-binding</keyword>
<keyword id="KW-1185">Reference proteome</keyword>